<comment type="function">
    <text evidence="2">Vertebrate selective toxin that causes pain by targeting tetrodotoxin (TTX)-sensitive sodium channels in peripheral sensory neurons. Is able to inactivate rapid activation and inactivation currents of Nav1.7/SCN9A (on mouse channel EC(50)=18 nM, on human channel EC(50)=30 nM). The leak current is via the central pore of the Nav channel. Induces a strong hyperpolarising shift in the voltage-dependence of hNav1.7/SCN9A activation, while voltage-dependence of steady-state fast inactivation is unaffected. Toxin-induced hNav1.7/SCN9A persistant current is very slowly reversible with repeated wash steps over 30 minutes. Also shows activity on hNav1.6/SCN8A (EC(50)=25 nM), hNav1.8/SCN10A (EC(50)=331 nM), and hNav1.9/SCN11A. This toxin does not alter the single-channel amplitude, but increases the proportion of open channel events (from 13% (control) to 60% (with toxin)). In vivo, intraplantar injection causes gradually developing and long-lasting nocifensive behaviors in mice, which largely decrease with injection of TTX.</text>
</comment>
<comment type="subcellular location">
    <subcellularLocation>
        <location evidence="2">Secreted</location>
    </subcellularLocation>
</comment>
<comment type="tissue specificity">
    <text evidence="5">Expressed by the venom gland.</text>
</comment>
<comment type="toxic dose">
    <text evidence="2">PD(50) (measured at 1 hour) is 77.8 nmol/g by intrathoracic injection into insects (blowfly L.caesar). Is not lethal by intrathoracic injection to insect (blowflies) at the highest dose tested (109 nmol/g).</text>
</comment>
<comment type="similarity">
    <text evidence="4">Belongs to the formicidae venom clade 1 family.</text>
</comment>
<sequence>MKAPKFLFIAVIIVGLSGSLTWASPLPKAKAVADAMAAAEALAEAEPEALAPIFALLLLSGLFSLPALQHYIEKNYINGK</sequence>
<feature type="signal peptide" evidence="1">
    <location>
        <begin position="1"/>
        <end position="23"/>
    </location>
</feature>
<feature type="propeptide" id="PRO_0000459146" evidence="5">
    <location>
        <begin position="24"/>
        <end position="49"/>
    </location>
</feature>
<feature type="peptide" id="PRO_0000459147" description="Delta-myrmicitoxin-Ta3a" evidence="5">
    <location>
        <begin position="50"/>
        <end position="78"/>
    </location>
</feature>
<feature type="modified residue" description="Asparagine amide" evidence="5">
    <location>
        <position position="78"/>
    </location>
</feature>
<reference key="1">
    <citation type="journal article" date="2023" name="Nat. Commun.">
        <title>Ant venoms contain vertebrate-selective pain-causing sodium channel toxins.</title>
        <authorList>
            <person name="Robinson S.D."/>
            <person name="Deuis J.R."/>
            <person name="Touchard A."/>
            <person name="Keramidas A."/>
            <person name="Mueller A."/>
            <person name="Schroeder C.I."/>
            <person name="Barasse V."/>
            <person name="Walker A.A."/>
            <person name="Brinkwirth N."/>
            <person name="Jami S."/>
            <person name="Bonnafe E."/>
            <person name="Treilhou M."/>
            <person name="Undheim E.A.B."/>
            <person name="Schmidt J.O."/>
            <person name="King G.F."/>
            <person name="Vetter I."/>
        </authorList>
    </citation>
    <scope>NUCLEOTIDE SEQUENCE [MRNA]</scope>
    <scope>FUNCTION</scope>
    <scope>BIOASSAY</scope>
    <scope>TOXIC DOSE</scope>
    <scope>SYNTHESIS OF 50-78</scope>
    <scope>IDENTIFICATION BY MASS SPECTROMETRY</scope>
    <scope>PROBABLE AMIDATION AT ASN-78</scope>
    <scope>SUBCELLULAR LOCATION</scope>
    <source>
        <tissue>Venom</tissue>
        <tissue>Venom gland</tissue>
    </source>
</reference>
<dbReference type="EMBL" id="OW518818">
    <property type="protein sequence ID" value="CAH2618678.1"/>
    <property type="molecule type" value="mRNA"/>
</dbReference>
<dbReference type="GO" id="GO:0005576">
    <property type="term" value="C:extracellular region"/>
    <property type="evidence" value="ECO:0007669"/>
    <property type="project" value="UniProtKB-SubCell"/>
</dbReference>
<dbReference type="GO" id="GO:0017080">
    <property type="term" value="F:sodium channel regulator activity"/>
    <property type="evidence" value="ECO:0007669"/>
    <property type="project" value="UniProtKB-KW"/>
</dbReference>
<dbReference type="GO" id="GO:0090729">
    <property type="term" value="F:toxin activity"/>
    <property type="evidence" value="ECO:0007669"/>
    <property type="project" value="UniProtKB-KW"/>
</dbReference>
<proteinExistence type="evidence at protein level"/>
<protein>
    <recommendedName>
        <fullName evidence="4">Delta-myrmicitoxin-Ta3a</fullName>
        <shortName evidence="4">Delta-MYRTX-Ta3a</shortName>
        <shortName evidence="3">Ta3a</shortName>
    </recommendedName>
    <alternativeName>
        <fullName evidence="6">U3_MYRTX_Ta1a</fullName>
    </alternativeName>
</protein>
<name>TA3A_TETAF</name>
<accession>P0DX61</accession>
<evidence type="ECO:0000255" key="1"/>
<evidence type="ECO:0000269" key="2">
    <source>
    </source>
</evidence>
<evidence type="ECO:0000303" key="3">
    <source>
    </source>
</evidence>
<evidence type="ECO:0000305" key="4"/>
<evidence type="ECO:0000305" key="5">
    <source>
    </source>
</evidence>
<evidence type="ECO:0000312" key="6">
    <source>
        <dbReference type="EMBL" id="CAH2618678.1"/>
    </source>
</evidence>
<keyword id="KW-0027">Amidation</keyword>
<keyword id="KW-0872">Ion channel impairing toxin</keyword>
<keyword id="KW-0528">Neurotoxin</keyword>
<keyword id="KW-0964">Secreted</keyword>
<keyword id="KW-0732">Signal</keyword>
<keyword id="KW-0800">Toxin</keyword>
<keyword id="KW-0738">Voltage-gated sodium channel impairing toxin</keyword>
<organism>
    <name type="scientific">Tetramorium africanum</name>
    <name type="common">Fierce ant</name>
    <name type="synonym">Macromischa africana</name>
    <dbReference type="NCBI Taxonomy" id="628533"/>
    <lineage>
        <taxon>Eukaryota</taxon>
        <taxon>Metazoa</taxon>
        <taxon>Ecdysozoa</taxon>
        <taxon>Arthropoda</taxon>
        <taxon>Hexapoda</taxon>
        <taxon>Insecta</taxon>
        <taxon>Pterygota</taxon>
        <taxon>Neoptera</taxon>
        <taxon>Endopterygota</taxon>
        <taxon>Hymenoptera</taxon>
        <taxon>Apocrita</taxon>
        <taxon>Aculeata</taxon>
        <taxon>Formicoidea</taxon>
        <taxon>Formicidae</taxon>
        <taxon>Myrmicinae</taxon>
        <taxon>Tetramorium</taxon>
    </lineage>
</organism>